<name>SLAB_BOTJA</name>
<protein>
    <recommendedName>
        <fullName>Snaclec bothrojaracin subunit beta</fullName>
        <shortName>BJC subunit beta</shortName>
    </recommendedName>
</protein>
<keyword id="KW-1203">Blood coagulation cascade inhibiting toxin</keyword>
<keyword id="KW-0903">Direct protein sequencing</keyword>
<keyword id="KW-1015">Disulfide bond</keyword>
<keyword id="KW-1199">Hemostasis impairing toxin</keyword>
<keyword id="KW-1201">Platelet aggregation inhibiting toxin</keyword>
<keyword id="KW-0964">Secreted</keyword>
<keyword id="KW-0732">Signal</keyword>
<keyword id="KW-0800">Toxin</keyword>
<evidence type="ECO:0000255" key="1">
    <source>
        <dbReference type="PROSITE-ProRule" id="PRU00040"/>
    </source>
</evidence>
<evidence type="ECO:0000269" key="2">
    <source>
    </source>
</evidence>
<evidence type="ECO:0000269" key="3">
    <source>
    </source>
</evidence>
<evidence type="ECO:0000269" key="4">
    <source>
    </source>
</evidence>
<evidence type="ECO:0000269" key="5">
    <source>
    </source>
</evidence>
<evidence type="ECO:0000269" key="6">
    <source>
    </source>
</evidence>
<evidence type="ECO:0000269" key="7">
    <source>
    </source>
</evidence>
<evidence type="ECO:0000269" key="8">
    <source>
    </source>
</evidence>
<evidence type="ECO:0000269" key="9">
    <source>
    </source>
</evidence>
<evidence type="ECO:0000269" key="10">
    <source>
    </source>
</evidence>
<evidence type="ECO:0000269" key="11">
    <source>
    </source>
</evidence>
<evidence type="ECO:0000269" key="12">
    <source>
    </source>
</evidence>
<evidence type="ECO:0000305" key="13"/>
<sequence length="150" mass="17292">MGRFIFVSFGLLVVFLSLSGTAADCPPDWSSYEGSCYRVFEQKMNWEDAEKFCTQQQTGGHLVSFQSSEEADFVVSLTSPILRDSFVWTGLSDVWKECSFEWSDGSDLSYKDNYQFVFSEYECVASKTKNNKWRIIPCTKLEYFVCEFQA</sequence>
<dbReference type="EMBL" id="AY962525">
    <property type="protein sequence ID" value="AAX68504.1"/>
    <property type="molecule type" value="mRNA"/>
</dbReference>
<dbReference type="SMR" id="Q56EB0"/>
<dbReference type="MEROPS" id="I63.002"/>
<dbReference type="GO" id="GO:0005576">
    <property type="term" value="C:extracellular region"/>
    <property type="evidence" value="ECO:0007669"/>
    <property type="project" value="UniProtKB-SubCell"/>
</dbReference>
<dbReference type="GO" id="GO:0090729">
    <property type="term" value="F:toxin activity"/>
    <property type="evidence" value="ECO:0007669"/>
    <property type="project" value="UniProtKB-KW"/>
</dbReference>
<dbReference type="FunFam" id="3.10.100.10:FF:000087">
    <property type="entry name" value="Snaclec rhodocetin subunit delta"/>
    <property type="match status" value="1"/>
</dbReference>
<dbReference type="Gene3D" id="3.10.100.10">
    <property type="entry name" value="Mannose-Binding Protein A, subunit A"/>
    <property type="match status" value="1"/>
</dbReference>
<dbReference type="InterPro" id="IPR001304">
    <property type="entry name" value="C-type_lectin-like"/>
</dbReference>
<dbReference type="InterPro" id="IPR016186">
    <property type="entry name" value="C-type_lectin-like/link_sf"/>
</dbReference>
<dbReference type="InterPro" id="IPR050111">
    <property type="entry name" value="C-type_lectin/snaclec_domain"/>
</dbReference>
<dbReference type="InterPro" id="IPR016187">
    <property type="entry name" value="CTDL_fold"/>
</dbReference>
<dbReference type="PANTHER" id="PTHR22803">
    <property type="entry name" value="MANNOSE, PHOSPHOLIPASE, LECTIN RECEPTOR RELATED"/>
    <property type="match status" value="1"/>
</dbReference>
<dbReference type="Pfam" id="PF00059">
    <property type="entry name" value="Lectin_C"/>
    <property type="match status" value="1"/>
</dbReference>
<dbReference type="SMART" id="SM00034">
    <property type="entry name" value="CLECT"/>
    <property type="match status" value="1"/>
</dbReference>
<dbReference type="SUPFAM" id="SSF56436">
    <property type="entry name" value="C-type lectin-like"/>
    <property type="match status" value="1"/>
</dbReference>
<dbReference type="PROSITE" id="PS50041">
    <property type="entry name" value="C_TYPE_LECTIN_2"/>
    <property type="match status" value="1"/>
</dbReference>
<comment type="function">
    <text evidence="2 3 4 5 6 8 9 11 12">This potent antithrombotic agent acts in a calcium-independent manner. Exerts its anticoagulant effect by two distinct mechanisms. It binds to activated thrombin through exosite 1, blocking fibrinogen clotting, platelet activation, factor V activation and other effects, and it interacts with prothrombin (F2), decreasing its proteolytic activation -especially in the presence of factor Va. In vivo, intravenous injection before thrombosis induction causes a significant decrease in thrombus weight. Furthermore, BJC shows a prolonged effect by remaining in the plasma bound to prothrombin for at least 12 hours.</text>
</comment>
<comment type="subunit">
    <text evidence="8">Heterodimer of subunits alpha and beta; disulfide-linked.</text>
</comment>
<comment type="subcellular location">
    <subcellularLocation>
        <location>Secreted</location>
    </subcellularLocation>
</comment>
<comment type="tissue specificity">
    <text>Expressed by the venom gland.</text>
</comment>
<comment type="similarity">
    <text evidence="13">Belongs to the snaclec family.</text>
</comment>
<proteinExistence type="evidence at protein level"/>
<feature type="signal peptide" evidence="7 8 10 11">
    <location>
        <begin position="1"/>
        <end position="23"/>
    </location>
</feature>
<feature type="chain" id="PRO_5000095801" description="Snaclec bothrojaracin subunit beta">
    <location>
        <begin position="24"/>
        <end position="150"/>
    </location>
</feature>
<feature type="domain" description="C-type lectin" evidence="1">
    <location>
        <begin position="32"/>
        <end position="147"/>
    </location>
</feature>
<feature type="disulfide bond" evidence="1">
    <location>
        <begin position="25"/>
        <end position="36"/>
    </location>
</feature>
<feature type="disulfide bond" evidence="1">
    <location>
        <begin position="53"/>
        <end position="146"/>
    </location>
</feature>
<feature type="disulfide bond" description="Interchain (with C-102 in subunit alpha)" evidence="1">
    <location>
        <position position="98"/>
    </location>
</feature>
<feature type="disulfide bond" evidence="1">
    <location>
        <begin position="123"/>
        <end position="138"/>
    </location>
</feature>
<feature type="sequence variant" evidence="10">
    <original>S</original>
    <variation>P</variation>
    <location>
        <position position="31"/>
    </location>
</feature>
<feature type="sequence variant" evidence="10">
    <original>G</original>
    <variation>Q</variation>
    <location>
        <position position="34"/>
    </location>
</feature>
<feature type="sequence variant" evidence="10">
    <original>S</original>
    <variation>H</variation>
    <location>
        <position position="35"/>
    </location>
</feature>
<feature type="sequence variant" evidence="10">
    <original>S</original>
    <variation>Q</variation>
    <location>
        <position position="35"/>
    </location>
</feature>
<feature type="sequence variant" evidence="10">
    <original>F</original>
    <variation>V</variation>
    <location>
        <position position="40"/>
    </location>
</feature>
<feature type="sequence variant" evidence="10">
    <original>K</original>
    <variation>E</variation>
    <location>
        <position position="43"/>
    </location>
</feature>
<feature type="sequence variant" evidence="10">
    <original>K</original>
    <variation>Q</variation>
    <location>
        <position position="43"/>
    </location>
</feature>
<feature type="sequence variant" evidence="10">
    <original>W</original>
    <variation>H</variation>
    <location>
        <position position="46"/>
    </location>
</feature>
<feature type="sequence variant" evidence="10">
    <original>W</original>
    <variation>N</variation>
    <location>
        <position position="46"/>
    </location>
</feature>
<feature type="sequence variant">
    <original>K</original>
    <variation>R</variation>
    <location>
        <position position="51"/>
    </location>
</feature>
<feature type="sequence variant" evidence="10">
    <original>K</original>
    <variation>Y</variation>
    <location>
        <position position="51"/>
    </location>
</feature>
<reference key="1">
    <citation type="journal article" date="1997" name="Eur. J. Biochem.">
        <title>Molecular cloning and expression of bothrojaracin, a potent thrombin inhibitor from snake venom.</title>
        <authorList>
            <person name="Arocas V."/>
            <person name="Castro H.C."/>
            <person name="Zingali R.B."/>
            <person name="Guillin M.-C."/>
            <person name="Jandrot-Perrus M."/>
            <person name="Bon C."/>
            <person name="Wisner A."/>
        </authorList>
    </citation>
    <scope>NUCLEOTIDE SEQUENCE [MRNA]</scope>
    <scope>PROTEIN SEQUENCE OF 24-50; 84-92; 98-118; 120-125 AND 135-147</scope>
    <scope>FUNCTION</scope>
    <source>
        <tissue>Venom</tissue>
        <tissue>Venom gland</tissue>
    </source>
</reference>
<reference key="2">
    <citation type="journal article" date="1993" name="Biochemistry">
        <title>Bothrojaracin, a new thrombin inhibitor isolated from Bothrops jararaca venom: characterization and mechanism of thrombin inhibition.</title>
        <authorList>
            <person name="Zingali R.B."/>
            <person name="Jandrot-Perrus M."/>
            <person name="Guillin M.-C."/>
            <person name="Bon C."/>
        </authorList>
    </citation>
    <scope>PROTEIN SEQUENCE OF 24-39</scope>
    <scope>FUNCTION</scope>
    <scope>SUBUNIT</scope>
</reference>
<reference key="3">
    <citation type="journal article" date="1997" name="Toxicon">
        <title>Distinct bothrojaracin isoforms produced by individual jararaca (Bothrops jararaca) snakes.</title>
        <authorList>
            <person name="Monteiro R.Q."/>
            <person name="Carlini C.R."/>
            <person name="Guimaraes J.A."/>
            <person name="Bon C."/>
            <person name="Zingali R.B."/>
        </authorList>
    </citation>
    <scope>PROTEIN SEQUENCE OF 24-51</scope>
    <scope>VARIANTS PRO-31; GLN-34; HIS-35; GLN-35; VAL-40; GLU-43; GLN-43; HIS-46; ASN-46 AND TYR-51</scope>
    <source>
        <tissue>Venom</tissue>
    </source>
</reference>
<reference key="4">
    <citation type="journal article" date="2008" name="Toxicon">
        <title>Identification and characterization of a new member of snake venom thrombin inhibitors from Bothrops insularis using a proteomic approach.</title>
        <authorList>
            <person name="Oliveira-Carvalho A.L."/>
            <person name="Guimaraes P.R."/>
            <person name="Abreu P.A."/>
            <person name="Dutra D.L.S."/>
            <person name="Junqueira-de-Azevedo I.L.M."/>
            <person name="Rodrigues C.R."/>
            <person name="Ho P.L."/>
            <person name="Castro H.C."/>
            <person name="Zingali R.B."/>
        </authorList>
    </citation>
    <scope>PROTEIN SEQUENCE OF 24-38 AND 84-96</scope>
    <scope>IDENTIFICATION BY MASS SPECTROMETRY</scope>
</reference>
<reference key="5">
    <citation type="journal article" date="1996" name="Biochemistry">
        <title>Bothrojaracin: a potent two-site-directed thrombin inhibitor.</title>
        <authorList>
            <person name="Arocas V."/>
            <person name="Zingali R.B."/>
            <person name="Guillin M.-C."/>
            <person name="Bon C."/>
            <person name="Jandrot-Perrus M."/>
        </authorList>
    </citation>
    <scope>FUNCTION</scope>
</reference>
<reference key="6">
    <citation type="journal article" date="1998" name="Thromb. Haemost.">
        <title>Inhibition of thrombin-catalyzed factor V activation by bothrojaracin.</title>
        <authorList>
            <person name="Arocas V."/>
            <person name="Lemaire C."/>
            <person name="Bouton M.C."/>
            <person name="Bezeaud A."/>
            <person name="Bon C."/>
            <person name="Guillin M.-C."/>
            <person name="Jandrot-Perrus M."/>
        </authorList>
    </citation>
    <scope>FUNCTION</scope>
</reference>
<reference key="7">
    <citation type="journal article" date="2000" name="Arch. Biochem. Biophys.">
        <title>Inhibition of prothrombin activation by bothrojaracin, a C-type lectin from Bothrops jararaca venom.</title>
        <authorList>
            <person name="Monteiro R.Q."/>
            <person name="Zingali R.B."/>
        </authorList>
    </citation>
    <scope>FUNCTION</scope>
</reference>
<reference key="8">
    <citation type="journal article" date="2001" name="Haemostasis">
        <title>Interaction of bothrojaracin with prothrombin.</title>
        <authorList>
            <person name="Zingali R.B."/>
            <person name="Bianconi M.L."/>
            <person name="Monteiro R.Q."/>
        </authorList>
    </citation>
    <scope>FUNCTION</scope>
</reference>
<reference key="9">
    <citation type="journal article" date="2001" name="Protein Sci.">
        <title>Characterization of bothrojaracin interaction with human prothrombin.</title>
        <authorList>
            <person name="Monteiro R.Q."/>
            <person name="Bock P.E."/>
            <person name="Bianconi M.L."/>
            <person name="Zingali R.B."/>
        </authorList>
    </citation>
    <scope>FUNCTION</scope>
</reference>
<reference key="10">
    <citation type="journal article" date="2002" name="Thromb. Haemost.">
        <title>Bothrojaracin, a proexosite I ligand, inhibits factor Va-accelerated prothrombin activation.</title>
        <authorList>
            <person name="Monteiro R.Q."/>
            <person name="Zingali R.B."/>
        </authorList>
    </citation>
    <scope>FUNCTION</scope>
</reference>
<reference key="11">
    <citation type="journal article" date="2005" name="Pathophysiol. Haemost. Thromb.">
        <title>Bothrojaracin, a Bothrops jararaca snake venom-derived (pro)thrombin inhibitor, as an anti-thrombotic molecule.</title>
        <authorList>
            <person name="Zingali R.B."/>
            <person name="Ferreira M.S."/>
            <person name="Assafim M."/>
            <person name="Frattani F.S."/>
            <person name="Monteiro R.Q."/>
        </authorList>
    </citation>
    <scope>FUNCTION</scope>
    <scope>ION-DEPENDENCE</scope>
    <scope>BIOASSAY</scope>
</reference>
<organism>
    <name type="scientific">Bothrops jararaca</name>
    <name type="common">Jararaca</name>
    <name type="synonym">Bothrops jajaraca</name>
    <dbReference type="NCBI Taxonomy" id="8724"/>
    <lineage>
        <taxon>Eukaryota</taxon>
        <taxon>Metazoa</taxon>
        <taxon>Chordata</taxon>
        <taxon>Craniata</taxon>
        <taxon>Vertebrata</taxon>
        <taxon>Euteleostomi</taxon>
        <taxon>Lepidosauria</taxon>
        <taxon>Squamata</taxon>
        <taxon>Bifurcata</taxon>
        <taxon>Unidentata</taxon>
        <taxon>Episquamata</taxon>
        <taxon>Toxicofera</taxon>
        <taxon>Serpentes</taxon>
        <taxon>Colubroidea</taxon>
        <taxon>Viperidae</taxon>
        <taxon>Crotalinae</taxon>
        <taxon>Bothrops</taxon>
    </lineage>
</organism>
<accession>Q56EB0</accession>